<proteinExistence type="inferred from homology"/>
<keyword id="KW-0235">DNA replication</keyword>
<keyword id="KW-0238">DNA-binding</keyword>
<keyword id="KW-0426">Late protein</keyword>
<keyword id="KW-0946">Virion</keyword>
<comment type="function">
    <text evidence="1">DNA-binding protein that plays a critical role in nucleoid compaction, genome replication and DNA replication and transcription (By similarity). Binds to both ssDNA and dsDNA with a binding site covering about 15 nucleotides (By similarity). Displays DNA-supercoiling activity only when associated with the viral DNA topoisomerase 2 (By similarity).</text>
</comment>
<comment type="activity regulation">
    <text evidence="1">Stilbene derivatives SD1 and SD4 disrupt the binding between pA104R and DNA and inhibit the viral replication in primary alveolar macrophages.</text>
</comment>
<comment type="subunit">
    <text evidence="1">Homodimer.</text>
</comment>
<comment type="subcellular location">
    <subcellularLocation>
        <location evidence="1">Virion</location>
    </subcellularLocation>
    <text evidence="1">Found in association with viral nucleoid.</text>
</comment>
<comment type="induction">
    <text evidence="1">Expressed in the late phase of the viral replicative cycle.</text>
</comment>
<comment type="miscellaneous">
    <text evidence="1">Host antibody response against A104R protein is higher in asymptomatic than in chronically infected hosts.</text>
</comment>
<comment type="similarity">
    <text evidence="2">Belongs to the bacterial histone-like protein family.</text>
</comment>
<reference key="1">
    <citation type="journal article" date="1993" name="Nucleic Acids Res.">
        <title>An African swine fever virus gene with similarity to bacterial DNA binding proteins, bacterial integration host factors, and the Bacillus phage SPO1 transcription factor, TF1.</title>
        <authorList>
            <person name="Neilan J.G."/>
            <person name="Lu Z."/>
            <person name="Kutish G.F."/>
            <person name="Sussman M.D."/>
            <person name="Roberts P.C."/>
            <person name="Yozawa T."/>
            <person name="Rock D.L."/>
        </authorList>
    </citation>
    <scope>NUCLEOTIDE SEQUENCE [GENOMIC DNA]</scope>
</reference>
<reference key="2">
    <citation type="submission" date="2003-03" db="EMBL/GenBank/DDBJ databases">
        <title>African swine fever virus genomes.</title>
        <authorList>
            <person name="Kutish G.F."/>
            <person name="Rock D.L."/>
        </authorList>
    </citation>
    <scope>NUCLEOTIDE SEQUENCE [LARGE SCALE GENOMIC DNA]</scope>
</reference>
<name>VHLP_ASFM2</name>
<sequence length="104" mass="11609">MSTKKKPTITKQELYSLVAADTQLNKALIERIFTSQQKIIQNALKHNQEVIIPPGIKFTVVTVKAKPARQGHNPATGEPIQIKAKPEHKAVKIRALKPVHDMLN</sequence>
<gene>
    <name type="ordered locus">Mal-043</name>
    <name type="ORF">LMW5-AR</name>
</gene>
<organismHost>
    <name type="scientific">Ornithodoros</name>
    <name type="common">relapsing fever ticks</name>
    <dbReference type="NCBI Taxonomy" id="6937"/>
</organismHost>
<organismHost>
    <name type="scientific">Phacochoerus aethiopicus</name>
    <name type="common">Warthog</name>
    <dbReference type="NCBI Taxonomy" id="85517"/>
</organismHost>
<organismHost>
    <name type="scientific">Phacochoerus africanus</name>
    <name type="common">Warthog</name>
    <dbReference type="NCBI Taxonomy" id="41426"/>
</organismHost>
<organismHost>
    <name type="scientific">Potamochoerus larvatus</name>
    <name type="common">Bushpig</name>
    <dbReference type="NCBI Taxonomy" id="273792"/>
</organismHost>
<organismHost>
    <name type="scientific">Sus scrofa</name>
    <name type="common">Pig</name>
    <dbReference type="NCBI Taxonomy" id="9823"/>
</organismHost>
<accession>P68743</accession>
<accession>P43272</accession>
<evidence type="ECO:0000250" key="1">
    <source>
        <dbReference type="UniProtKB" id="P68742"/>
    </source>
</evidence>
<evidence type="ECO:0000305" key="2"/>
<organism>
    <name type="scientific">African swine fever virus (isolate Tick/Malawi/Lil 20-1/1983)</name>
    <name type="common">ASFV</name>
    <dbReference type="NCBI Taxonomy" id="10500"/>
    <lineage>
        <taxon>Viruses</taxon>
        <taxon>Varidnaviria</taxon>
        <taxon>Bamfordvirae</taxon>
        <taxon>Nucleocytoviricota</taxon>
        <taxon>Pokkesviricetes</taxon>
        <taxon>Asfuvirales</taxon>
        <taxon>Asfarviridae</taxon>
        <taxon>Asfivirus</taxon>
        <taxon>African swine fever virus</taxon>
    </lineage>
</organism>
<feature type="chain" id="PRO_0000105084" description="Viral histone-like protein">
    <location>
        <begin position="1"/>
        <end position="104"/>
    </location>
</feature>
<feature type="site" description="DNA-binding" evidence="1">
    <location>
        <position position="57"/>
    </location>
</feature>
<feature type="site" description="DNA-binding" evidence="1">
    <location>
        <position position="69"/>
    </location>
</feature>
<feature type="site" description="DNA-binding" evidence="1">
    <location>
        <position position="72"/>
    </location>
</feature>
<feature type="site" description="DNA-binding" evidence="1">
    <location>
        <position position="74"/>
    </location>
</feature>
<feature type="site" description="DNA-binding" evidence="1">
    <location>
        <position position="83"/>
    </location>
</feature>
<feature type="site" description="DNA-binding" evidence="1">
    <location>
        <position position="85"/>
    </location>
</feature>
<feature type="site" description="DNA-binding" evidence="1">
    <location>
        <position position="92"/>
    </location>
</feature>
<feature type="site" description="DNA-binding" evidence="1">
    <location>
        <position position="94"/>
    </location>
</feature>
<feature type="site" description="DNA-binding" evidence="1">
    <location>
        <position position="96"/>
    </location>
</feature>
<feature type="site" description="DNA-binding" evidence="1">
    <location>
        <position position="97"/>
    </location>
</feature>
<protein>
    <recommendedName>
        <fullName>Viral histone-like protein</fullName>
    </recommendedName>
    <alternativeName>
        <fullName evidence="1">DNA-binding protein pA104R</fullName>
    </alternativeName>
    <alternativeName>
        <fullName>pA104R</fullName>
    </alternativeName>
</protein>
<dbReference type="EMBL" id="L10066">
    <property type="protein sequence ID" value="AAA42689.1"/>
    <property type="molecule type" value="Genomic_DNA"/>
</dbReference>
<dbReference type="EMBL" id="AY261361">
    <property type="status" value="NOT_ANNOTATED_CDS"/>
    <property type="molecule type" value="Genomic_DNA"/>
</dbReference>
<dbReference type="PIR" id="S35616">
    <property type="entry name" value="S35616"/>
</dbReference>
<dbReference type="SMR" id="P68743"/>
<dbReference type="KEGG" id="vg:22220416"/>
<dbReference type="Proteomes" id="UP000000860">
    <property type="component" value="Segment"/>
</dbReference>
<dbReference type="GO" id="GO:0044423">
    <property type="term" value="C:virion component"/>
    <property type="evidence" value="ECO:0007669"/>
    <property type="project" value="UniProtKB-KW"/>
</dbReference>
<dbReference type="GO" id="GO:0003677">
    <property type="term" value="F:DNA binding"/>
    <property type="evidence" value="ECO:0007669"/>
    <property type="project" value="UniProtKB-KW"/>
</dbReference>
<dbReference type="GO" id="GO:0030527">
    <property type="term" value="F:structural constituent of chromatin"/>
    <property type="evidence" value="ECO:0007669"/>
    <property type="project" value="InterPro"/>
</dbReference>
<dbReference type="GO" id="GO:0006260">
    <property type="term" value="P:DNA replication"/>
    <property type="evidence" value="ECO:0007669"/>
    <property type="project" value="UniProtKB-KW"/>
</dbReference>
<dbReference type="Gene3D" id="4.10.520.10">
    <property type="entry name" value="IHF-like DNA-binding proteins"/>
    <property type="match status" value="1"/>
</dbReference>
<dbReference type="InterPro" id="IPR000119">
    <property type="entry name" value="Hist_DNA-bd"/>
</dbReference>
<dbReference type="InterPro" id="IPR020816">
    <property type="entry name" value="Histone-like_DNA-bd_CS"/>
</dbReference>
<dbReference type="InterPro" id="IPR010992">
    <property type="entry name" value="IHF-like_DNA-bd_dom_sf"/>
</dbReference>
<dbReference type="PANTHER" id="PTHR33175">
    <property type="entry name" value="DNA-BINDING PROTEIN HU"/>
    <property type="match status" value="1"/>
</dbReference>
<dbReference type="PANTHER" id="PTHR33175:SF13">
    <property type="entry name" value="HISTONE-LIKE PROTEIN"/>
    <property type="match status" value="1"/>
</dbReference>
<dbReference type="Pfam" id="PF00216">
    <property type="entry name" value="Bac_DNA_binding"/>
    <property type="match status" value="1"/>
</dbReference>
<dbReference type="SMART" id="SM00411">
    <property type="entry name" value="BHL"/>
    <property type="match status" value="1"/>
</dbReference>
<dbReference type="SUPFAM" id="SSF47729">
    <property type="entry name" value="IHF-like DNA-binding proteins"/>
    <property type="match status" value="1"/>
</dbReference>
<dbReference type="PROSITE" id="PS00045">
    <property type="entry name" value="HISTONE_LIKE"/>
    <property type="match status" value="1"/>
</dbReference>